<accession>Q8YS75</accession>
<feature type="chain" id="PRO_0000147293" description="GTP cyclohydrolase 1 type 2 homolog">
    <location>
        <begin position="1"/>
        <end position="263"/>
    </location>
</feature>
<feature type="binding site" evidence="1">
    <location>
        <position position="65"/>
    </location>
    <ligand>
        <name>a divalent metal cation</name>
        <dbReference type="ChEBI" id="CHEBI:60240"/>
        <label>1</label>
    </ligand>
</feature>
<feature type="binding site" evidence="1">
    <location>
        <position position="66"/>
    </location>
    <ligand>
        <name>a divalent metal cation</name>
        <dbReference type="ChEBI" id="CHEBI:60240"/>
        <label>2</label>
    </ligand>
</feature>
<feature type="binding site" evidence="1">
    <location>
        <position position="104"/>
    </location>
    <ligand>
        <name>a divalent metal cation</name>
        <dbReference type="ChEBI" id="CHEBI:60240"/>
        <label>1</label>
    </ligand>
</feature>
<feature type="binding site" evidence="1">
    <location>
        <position position="225"/>
    </location>
    <ligand>
        <name>a divalent metal cation</name>
        <dbReference type="ChEBI" id="CHEBI:60240"/>
        <label>2</label>
    </ligand>
</feature>
<feature type="binding site" evidence="1">
    <location>
        <position position="229"/>
    </location>
    <ligand>
        <name>a divalent metal cation</name>
        <dbReference type="ChEBI" id="CHEBI:60240"/>
        <label>1</label>
    </ligand>
</feature>
<feature type="binding site" evidence="1">
    <location>
        <position position="229"/>
    </location>
    <ligand>
        <name>a divalent metal cation</name>
        <dbReference type="ChEBI" id="CHEBI:60240"/>
        <label>2</label>
    </ligand>
</feature>
<proteinExistence type="inferred from homology"/>
<evidence type="ECO:0000250" key="1">
    <source>
        <dbReference type="UniProtKB" id="P0AFP6"/>
    </source>
</evidence>
<evidence type="ECO:0000305" key="2"/>
<gene>
    <name type="ordered locus">alr3216</name>
</gene>
<sequence>MKIADLITWFESWANPAWCESWDNCGWQIEPGILHEEARVLVCLTPTLAVMEEAIALQANLIFAHHPLIFSPPKSLRRGEAIADMARLAFTKNIGIYSAHTNFDQVEDGTADVLAQILGLKDVAPIVPTQGGLGYGRVGLLDPFLNLQELLTVIQTRLAPPDLIFSPTADLQQIISRVAVLGGSGAGFISAVAETGAEAYLTSDCKFHQFQESRDRGLILIDAGHYATERPACDRLVEKLRSLNLHWVQLSNQDEDFRQFFVK</sequence>
<comment type="subunit">
    <text evidence="1">Homohexamer.</text>
</comment>
<comment type="similarity">
    <text evidence="2">Belongs to the GTP cyclohydrolase I type 2/NIF3 family.</text>
</comment>
<dbReference type="EMBL" id="BA000019">
    <property type="protein sequence ID" value="BAB74915.1"/>
    <property type="molecule type" value="Genomic_DNA"/>
</dbReference>
<dbReference type="PIR" id="AI2207">
    <property type="entry name" value="AI2207"/>
</dbReference>
<dbReference type="RefSeq" id="WP_010997367.1">
    <property type="nucleotide sequence ID" value="NZ_RSCN01000001.1"/>
</dbReference>
<dbReference type="SMR" id="Q8YS75"/>
<dbReference type="STRING" id="103690.gene:10495254"/>
<dbReference type="KEGG" id="ana:alr3216"/>
<dbReference type="eggNOG" id="COG0327">
    <property type="taxonomic scope" value="Bacteria"/>
</dbReference>
<dbReference type="OrthoDB" id="9792792at2"/>
<dbReference type="Proteomes" id="UP000002483">
    <property type="component" value="Chromosome"/>
</dbReference>
<dbReference type="GO" id="GO:0005737">
    <property type="term" value="C:cytoplasm"/>
    <property type="evidence" value="ECO:0007669"/>
    <property type="project" value="TreeGrafter"/>
</dbReference>
<dbReference type="GO" id="GO:0046872">
    <property type="term" value="F:metal ion binding"/>
    <property type="evidence" value="ECO:0007669"/>
    <property type="project" value="UniProtKB-KW"/>
</dbReference>
<dbReference type="FunFam" id="3.40.1390.30:FF:000001">
    <property type="entry name" value="GTP cyclohydrolase 1 type 2"/>
    <property type="match status" value="1"/>
</dbReference>
<dbReference type="Gene3D" id="3.40.1390.30">
    <property type="entry name" value="NIF3 (NGG1p interacting factor 3)-like"/>
    <property type="match status" value="2"/>
</dbReference>
<dbReference type="InterPro" id="IPR002678">
    <property type="entry name" value="DUF34/NIF3"/>
</dbReference>
<dbReference type="InterPro" id="IPR036069">
    <property type="entry name" value="DUF34/NIF3_sf"/>
</dbReference>
<dbReference type="NCBIfam" id="TIGR00486">
    <property type="entry name" value="YbgI_SA1388"/>
    <property type="match status" value="1"/>
</dbReference>
<dbReference type="PANTHER" id="PTHR13799:SF14">
    <property type="entry name" value="GTP CYCLOHYDROLASE 1 TYPE 2 HOMOLOG"/>
    <property type="match status" value="1"/>
</dbReference>
<dbReference type="PANTHER" id="PTHR13799">
    <property type="entry name" value="NGG1 INTERACTING FACTOR 3"/>
    <property type="match status" value="1"/>
</dbReference>
<dbReference type="Pfam" id="PF01784">
    <property type="entry name" value="DUF34_NIF3"/>
    <property type="match status" value="1"/>
</dbReference>
<dbReference type="SUPFAM" id="SSF102705">
    <property type="entry name" value="NIF3 (NGG1p interacting factor 3)-like"/>
    <property type="match status" value="1"/>
</dbReference>
<organism>
    <name type="scientific">Nostoc sp. (strain PCC 7120 / SAG 25.82 / UTEX 2576)</name>
    <dbReference type="NCBI Taxonomy" id="103690"/>
    <lineage>
        <taxon>Bacteria</taxon>
        <taxon>Bacillati</taxon>
        <taxon>Cyanobacteriota</taxon>
        <taxon>Cyanophyceae</taxon>
        <taxon>Nostocales</taxon>
        <taxon>Nostocaceae</taxon>
        <taxon>Nostoc</taxon>
    </lineage>
</organism>
<name>GCH1L_NOSS1</name>
<reference key="1">
    <citation type="journal article" date="2001" name="DNA Res.">
        <title>Complete genomic sequence of the filamentous nitrogen-fixing cyanobacterium Anabaena sp. strain PCC 7120.</title>
        <authorList>
            <person name="Kaneko T."/>
            <person name="Nakamura Y."/>
            <person name="Wolk C.P."/>
            <person name="Kuritz T."/>
            <person name="Sasamoto S."/>
            <person name="Watanabe A."/>
            <person name="Iriguchi M."/>
            <person name="Ishikawa A."/>
            <person name="Kawashima K."/>
            <person name="Kimura T."/>
            <person name="Kishida Y."/>
            <person name="Kohara M."/>
            <person name="Matsumoto M."/>
            <person name="Matsuno A."/>
            <person name="Muraki A."/>
            <person name="Nakazaki N."/>
            <person name="Shimpo S."/>
            <person name="Sugimoto M."/>
            <person name="Takazawa M."/>
            <person name="Yamada M."/>
            <person name="Yasuda M."/>
            <person name="Tabata S."/>
        </authorList>
    </citation>
    <scope>NUCLEOTIDE SEQUENCE [LARGE SCALE GENOMIC DNA]</scope>
    <source>
        <strain>PCC 7120 / SAG 25.82 / UTEX 2576</strain>
    </source>
</reference>
<protein>
    <recommendedName>
        <fullName>GTP cyclohydrolase 1 type 2 homolog</fullName>
    </recommendedName>
</protein>
<keyword id="KW-0479">Metal-binding</keyword>
<keyword id="KW-1185">Reference proteome</keyword>